<keyword id="KW-0131">Cell cycle</keyword>
<keyword id="KW-0132">Cell division</keyword>
<keyword id="KW-0195">Cyclin</keyword>
<keyword id="KW-1185">Reference proteome</keyword>
<protein>
    <recommendedName>
        <fullName>Cyclin-P2-1</fullName>
        <shortName>CycP2;1</shortName>
    </recommendedName>
</protein>
<evidence type="ECO:0000305" key="1"/>
<feature type="chain" id="PRO_0000287065" description="Cyclin-P2-1">
    <location>
        <begin position="1"/>
        <end position="217"/>
    </location>
</feature>
<reference key="1">
    <citation type="journal article" date="2002" name="Nature">
        <title>Sequence and analysis of rice chromosome 4.</title>
        <authorList>
            <person name="Feng Q."/>
            <person name="Zhang Y."/>
            <person name="Hao P."/>
            <person name="Wang S."/>
            <person name="Fu G."/>
            <person name="Huang Y."/>
            <person name="Li Y."/>
            <person name="Zhu J."/>
            <person name="Liu Y."/>
            <person name="Hu X."/>
            <person name="Jia P."/>
            <person name="Zhang Y."/>
            <person name="Zhao Q."/>
            <person name="Ying K."/>
            <person name="Yu S."/>
            <person name="Tang Y."/>
            <person name="Weng Q."/>
            <person name="Zhang L."/>
            <person name="Lu Y."/>
            <person name="Mu J."/>
            <person name="Lu Y."/>
            <person name="Zhang L.S."/>
            <person name="Yu Z."/>
            <person name="Fan D."/>
            <person name="Liu X."/>
            <person name="Lu T."/>
            <person name="Li C."/>
            <person name="Wu Y."/>
            <person name="Sun T."/>
            <person name="Lei H."/>
            <person name="Li T."/>
            <person name="Hu H."/>
            <person name="Guan J."/>
            <person name="Wu M."/>
            <person name="Zhang R."/>
            <person name="Zhou B."/>
            <person name="Chen Z."/>
            <person name="Chen L."/>
            <person name="Jin Z."/>
            <person name="Wang R."/>
            <person name="Yin H."/>
            <person name="Cai Z."/>
            <person name="Ren S."/>
            <person name="Lv G."/>
            <person name="Gu W."/>
            <person name="Zhu G."/>
            <person name="Tu Y."/>
            <person name="Jia J."/>
            <person name="Zhang Y."/>
            <person name="Chen J."/>
            <person name="Kang H."/>
            <person name="Chen X."/>
            <person name="Shao C."/>
            <person name="Sun Y."/>
            <person name="Hu Q."/>
            <person name="Zhang X."/>
            <person name="Zhang W."/>
            <person name="Wang L."/>
            <person name="Ding C."/>
            <person name="Sheng H."/>
            <person name="Gu J."/>
            <person name="Chen S."/>
            <person name="Ni L."/>
            <person name="Zhu F."/>
            <person name="Chen W."/>
            <person name="Lan L."/>
            <person name="Lai Y."/>
            <person name="Cheng Z."/>
            <person name="Gu M."/>
            <person name="Jiang J."/>
            <person name="Li J."/>
            <person name="Hong G."/>
            <person name="Xue Y."/>
            <person name="Han B."/>
        </authorList>
    </citation>
    <scope>NUCLEOTIDE SEQUENCE [LARGE SCALE GENOMIC DNA]</scope>
    <source>
        <strain>cv. Nipponbare</strain>
    </source>
</reference>
<reference key="2">
    <citation type="journal article" date="2005" name="Nature">
        <title>The map-based sequence of the rice genome.</title>
        <authorList>
            <consortium name="International rice genome sequencing project (IRGSP)"/>
        </authorList>
    </citation>
    <scope>NUCLEOTIDE SEQUENCE [LARGE SCALE GENOMIC DNA]</scope>
    <source>
        <strain>cv. Nipponbare</strain>
    </source>
</reference>
<reference key="3">
    <citation type="journal article" date="2008" name="Nucleic Acids Res.">
        <title>The rice annotation project database (RAP-DB): 2008 update.</title>
        <authorList>
            <consortium name="The rice annotation project (RAP)"/>
        </authorList>
    </citation>
    <scope>GENOME REANNOTATION</scope>
    <source>
        <strain>cv. Nipponbare</strain>
    </source>
</reference>
<reference key="4">
    <citation type="journal article" date="2013" name="Rice">
        <title>Improvement of the Oryza sativa Nipponbare reference genome using next generation sequence and optical map data.</title>
        <authorList>
            <person name="Kawahara Y."/>
            <person name="de la Bastide M."/>
            <person name="Hamilton J.P."/>
            <person name="Kanamori H."/>
            <person name="McCombie W.R."/>
            <person name="Ouyang S."/>
            <person name="Schwartz D.C."/>
            <person name="Tanaka T."/>
            <person name="Wu J."/>
            <person name="Zhou S."/>
            <person name="Childs K.L."/>
            <person name="Davidson R.M."/>
            <person name="Lin H."/>
            <person name="Quesada-Ocampo L."/>
            <person name="Vaillancourt B."/>
            <person name="Sakai H."/>
            <person name="Lee S.S."/>
            <person name="Kim J."/>
            <person name="Numa H."/>
            <person name="Itoh T."/>
            <person name="Buell C.R."/>
            <person name="Matsumoto T."/>
        </authorList>
    </citation>
    <scope>GENOME REANNOTATION</scope>
    <source>
        <strain>cv. Nipponbare</strain>
    </source>
</reference>
<reference key="5">
    <citation type="journal article" date="2005" name="PLoS Biol.">
        <title>The genomes of Oryza sativa: a history of duplications.</title>
        <authorList>
            <person name="Yu J."/>
            <person name="Wang J."/>
            <person name="Lin W."/>
            <person name="Li S."/>
            <person name="Li H."/>
            <person name="Zhou J."/>
            <person name="Ni P."/>
            <person name="Dong W."/>
            <person name="Hu S."/>
            <person name="Zeng C."/>
            <person name="Zhang J."/>
            <person name="Zhang Y."/>
            <person name="Li R."/>
            <person name="Xu Z."/>
            <person name="Li S."/>
            <person name="Li X."/>
            <person name="Zheng H."/>
            <person name="Cong L."/>
            <person name="Lin L."/>
            <person name="Yin J."/>
            <person name="Geng J."/>
            <person name="Li G."/>
            <person name="Shi J."/>
            <person name="Liu J."/>
            <person name="Lv H."/>
            <person name="Li J."/>
            <person name="Wang J."/>
            <person name="Deng Y."/>
            <person name="Ran L."/>
            <person name="Shi X."/>
            <person name="Wang X."/>
            <person name="Wu Q."/>
            <person name="Li C."/>
            <person name="Ren X."/>
            <person name="Wang J."/>
            <person name="Wang X."/>
            <person name="Li D."/>
            <person name="Liu D."/>
            <person name="Zhang X."/>
            <person name="Ji Z."/>
            <person name="Zhao W."/>
            <person name="Sun Y."/>
            <person name="Zhang Z."/>
            <person name="Bao J."/>
            <person name="Han Y."/>
            <person name="Dong L."/>
            <person name="Ji J."/>
            <person name="Chen P."/>
            <person name="Wu S."/>
            <person name="Liu J."/>
            <person name="Xiao Y."/>
            <person name="Bu D."/>
            <person name="Tan J."/>
            <person name="Yang L."/>
            <person name="Ye C."/>
            <person name="Zhang J."/>
            <person name="Xu J."/>
            <person name="Zhou Y."/>
            <person name="Yu Y."/>
            <person name="Zhang B."/>
            <person name="Zhuang S."/>
            <person name="Wei H."/>
            <person name="Liu B."/>
            <person name="Lei M."/>
            <person name="Yu H."/>
            <person name="Li Y."/>
            <person name="Xu H."/>
            <person name="Wei S."/>
            <person name="He X."/>
            <person name="Fang L."/>
            <person name="Zhang Z."/>
            <person name="Zhang Y."/>
            <person name="Huang X."/>
            <person name="Su Z."/>
            <person name="Tong W."/>
            <person name="Li J."/>
            <person name="Tong Z."/>
            <person name="Li S."/>
            <person name="Ye J."/>
            <person name="Wang L."/>
            <person name="Fang L."/>
            <person name="Lei T."/>
            <person name="Chen C.-S."/>
            <person name="Chen H.-C."/>
            <person name="Xu Z."/>
            <person name="Li H."/>
            <person name="Huang H."/>
            <person name="Zhang F."/>
            <person name="Xu H."/>
            <person name="Li N."/>
            <person name="Zhao C."/>
            <person name="Li S."/>
            <person name="Dong L."/>
            <person name="Huang Y."/>
            <person name="Li L."/>
            <person name="Xi Y."/>
            <person name="Qi Q."/>
            <person name="Li W."/>
            <person name="Zhang B."/>
            <person name="Hu W."/>
            <person name="Zhang Y."/>
            <person name="Tian X."/>
            <person name="Jiao Y."/>
            <person name="Liang X."/>
            <person name="Jin J."/>
            <person name="Gao L."/>
            <person name="Zheng W."/>
            <person name="Hao B."/>
            <person name="Liu S.-M."/>
            <person name="Wang W."/>
            <person name="Yuan L."/>
            <person name="Cao M."/>
            <person name="McDermott J."/>
            <person name="Samudrala R."/>
            <person name="Wang J."/>
            <person name="Wong G.K.-S."/>
            <person name="Yang H."/>
        </authorList>
    </citation>
    <scope>NUCLEOTIDE SEQUENCE [LARGE SCALE GENOMIC DNA]</scope>
    <source>
        <strain>cv. Nipponbare</strain>
    </source>
</reference>
<reference key="6">
    <citation type="journal article" date="2003" name="Science">
        <title>Collection, mapping, and annotation of over 28,000 cDNA clones from japonica rice.</title>
        <authorList>
            <consortium name="The rice full-length cDNA consortium"/>
        </authorList>
    </citation>
    <scope>NUCLEOTIDE SEQUENCE [LARGE SCALE MRNA]</scope>
    <source>
        <strain>cv. Nipponbare</strain>
    </source>
</reference>
<reference key="7">
    <citation type="journal article" date="2006" name="Mol. Genet. Genomics">
        <title>Genome-wide analysis of cyclin family in rice (Oryza sativa L.).</title>
        <authorList>
            <person name="La H."/>
            <person name="Li J."/>
            <person name="Ji Z."/>
            <person name="Cheng Y."/>
            <person name="Li X."/>
            <person name="Jiang S."/>
            <person name="Venkatesh P.N."/>
            <person name="Ramachandran S."/>
        </authorList>
    </citation>
    <scope>GENE FAMILY</scope>
    <scope>NOMENCLATURE</scope>
</reference>
<gene>
    <name type="primary">CYCP2-1</name>
    <name type="ordered locus">Os04g0552300</name>
    <name type="ordered locus">LOC_Os04g46660</name>
    <name type="ORF">OsJ_015051</name>
    <name type="ORF">OSJNBa0010H02.9</name>
</gene>
<organism>
    <name type="scientific">Oryza sativa subsp. japonica</name>
    <name type="common">Rice</name>
    <dbReference type="NCBI Taxonomy" id="39947"/>
    <lineage>
        <taxon>Eukaryota</taxon>
        <taxon>Viridiplantae</taxon>
        <taxon>Streptophyta</taxon>
        <taxon>Embryophyta</taxon>
        <taxon>Tracheophyta</taxon>
        <taxon>Spermatophyta</taxon>
        <taxon>Magnoliopsida</taxon>
        <taxon>Liliopsida</taxon>
        <taxon>Poales</taxon>
        <taxon>Poaceae</taxon>
        <taxon>BOP clade</taxon>
        <taxon>Oryzoideae</taxon>
        <taxon>Oryzeae</taxon>
        <taxon>Oryzinae</taxon>
        <taxon>Oryza</taxon>
        <taxon>Oryza sativa</taxon>
    </lineage>
</organism>
<sequence length="217" mass="23648">MASTELASDVYALPCGDDGTTALSTPVVVSVLASLLERHIARNERDQAAAADGEAARRARAFDSGTVLDMSLHAFLERFSRYANVSPQVYVVAYAYLDRLRRGDGVRVVSANAQRLLTTAILVASKFVEDRNYKNSYFAAVGGLTAAELSSLELDFLFLMQFRLNVSVSVFQSYCRHLEREVSYGGGYQVERCLKKALVCSGEAQAQQRQAASAAAQ</sequence>
<comment type="similarity">
    <text evidence="1">Belongs to the cyclin family. Cyclin U/P subfamily.</text>
</comment>
<proteinExistence type="evidence at transcript level"/>
<dbReference type="EMBL" id="AL606633">
    <property type="protein sequence ID" value="CAE01689.2"/>
    <property type="molecule type" value="Genomic_DNA"/>
</dbReference>
<dbReference type="EMBL" id="AP008210">
    <property type="protein sequence ID" value="BAF15417.1"/>
    <property type="molecule type" value="Genomic_DNA"/>
</dbReference>
<dbReference type="EMBL" id="AP014960">
    <property type="protein sequence ID" value="BAS90393.1"/>
    <property type="molecule type" value="Genomic_DNA"/>
</dbReference>
<dbReference type="EMBL" id="CM000141">
    <property type="protein sequence ID" value="EAZ31568.1"/>
    <property type="molecule type" value="Genomic_DNA"/>
</dbReference>
<dbReference type="EMBL" id="AK061100">
    <property type="protein sequence ID" value="BAG87726.1"/>
    <property type="molecule type" value="mRNA"/>
</dbReference>
<dbReference type="RefSeq" id="XP_015634440.1">
    <property type="nucleotide sequence ID" value="XM_015778954.1"/>
</dbReference>
<dbReference type="SMR" id="Q7FAT5"/>
<dbReference type="FunCoup" id="Q7FAT5">
    <property type="interactions" value="5"/>
</dbReference>
<dbReference type="STRING" id="39947.Q7FAT5"/>
<dbReference type="PaxDb" id="39947-Q7FAT5"/>
<dbReference type="EnsemblPlants" id="Os04t0552300-01">
    <property type="protein sequence ID" value="Os04t0552300-01"/>
    <property type="gene ID" value="Os04g0552300"/>
</dbReference>
<dbReference type="Gramene" id="Os04t0552300-01">
    <property type="protein sequence ID" value="Os04t0552300-01"/>
    <property type="gene ID" value="Os04g0552300"/>
</dbReference>
<dbReference type="KEGG" id="dosa:Os04g0552300"/>
<dbReference type="eggNOG" id="KOG1674">
    <property type="taxonomic scope" value="Eukaryota"/>
</dbReference>
<dbReference type="HOGENOM" id="CLU_057371_0_1_1"/>
<dbReference type="InParanoid" id="Q7FAT5"/>
<dbReference type="OMA" id="AIRISCK"/>
<dbReference type="OrthoDB" id="337735at2759"/>
<dbReference type="Proteomes" id="UP000000763">
    <property type="component" value="Chromosome 4"/>
</dbReference>
<dbReference type="Proteomes" id="UP000007752">
    <property type="component" value="Chromosome 4"/>
</dbReference>
<dbReference type="Proteomes" id="UP000059680">
    <property type="component" value="Chromosome 4"/>
</dbReference>
<dbReference type="GO" id="GO:0019901">
    <property type="term" value="F:protein kinase binding"/>
    <property type="evidence" value="ECO:0007669"/>
    <property type="project" value="InterPro"/>
</dbReference>
<dbReference type="GO" id="GO:0051301">
    <property type="term" value="P:cell division"/>
    <property type="evidence" value="ECO:0007669"/>
    <property type="project" value="UniProtKB-KW"/>
</dbReference>
<dbReference type="Gene3D" id="1.10.472.10">
    <property type="entry name" value="Cyclin-like"/>
    <property type="match status" value="1"/>
</dbReference>
<dbReference type="InterPro" id="IPR036915">
    <property type="entry name" value="Cyclin-like_sf"/>
</dbReference>
<dbReference type="InterPro" id="IPR012389">
    <property type="entry name" value="Cyclin_P/U"/>
</dbReference>
<dbReference type="InterPro" id="IPR013922">
    <property type="entry name" value="Cyclin_PHO80-like"/>
</dbReference>
<dbReference type="PANTHER" id="PTHR15615">
    <property type="match status" value="1"/>
</dbReference>
<dbReference type="PANTHER" id="PTHR15615:SF15">
    <property type="entry name" value="CYCLIN-U2-1"/>
    <property type="match status" value="1"/>
</dbReference>
<dbReference type="Pfam" id="PF08613">
    <property type="entry name" value="Cyclin"/>
    <property type="match status" value="1"/>
</dbReference>
<dbReference type="PIRSF" id="PIRSF027110">
    <property type="entry name" value="PREG"/>
    <property type="match status" value="1"/>
</dbReference>
<dbReference type="SUPFAM" id="SSF47954">
    <property type="entry name" value="Cyclin-like"/>
    <property type="match status" value="1"/>
</dbReference>
<accession>Q7FAT5</accession>
<accession>B7E5S9</accession>
<name>CCP21_ORYSJ</name>